<comment type="function">
    <text evidence="1">Catalyzes the synthesis of the hydroxymethylpyrimidine phosphate (HMP-P) moiety of thiamine from aminoimidazole ribotide (AIR) in a radical S-adenosyl-L-methionine (SAM)-dependent reaction.</text>
</comment>
<comment type="catalytic activity">
    <reaction evidence="1">
        <text>5-amino-1-(5-phospho-beta-D-ribosyl)imidazole + S-adenosyl-L-methionine = 4-amino-2-methyl-5-(phosphooxymethyl)pyrimidine + CO + 5'-deoxyadenosine + formate + L-methionine + 3 H(+)</text>
        <dbReference type="Rhea" id="RHEA:24840"/>
        <dbReference type="ChEBI" id="CHEBI:15378"/>
        <dbReference type="ChEBI" id="CHEBI:15740"/>
        <dbReference type="ChEBI" id="CHEBI:17245"/>
        <dbReference type="ChEBI" id="CHEBI:17319"/>
        <dbReference type="ChEBI" id="CHEBI:57844"/>
        <dbReference type="ChEBI" id="CHEBI:58354"/>
        <dbReference type="ChEBI" id="CHEBI:59789"/>
        <dbReference type="ChEBI" id="CHEBI:137981"/>
        <dbReference type="EC" id="4.1.99.17"/>
    </reaction>
</comment>
<comment type="cofactor">
    <cofactor evidence="1">
        <name>[4Fe-4S] cluster</name>
        <dbReference type="ChEBI" id="CHEBI:49883"/>
    </cofactor>
    <text evidence="1">Binds 1 [4Fe-4S] cluster per subunit. The cluster is coordinated with 3 cysteines and an exchangeable S-adenosyl-L-methionine.</text>
</comment>
<comment type="pathway">
    <text evidence="1">Cofactor biosynthesis; thiamine diphosphate biosynthesis.</text>
</comment>
<comment type="subunit">
    <text evidence="1">Homodimer.</text>
</comment>
<comment type="similarity">
    <text evidence="1">Belongs to the ThiC family.</text>
</comment>
<keyword id="KW-0004">4Fe-4S</keyword>
<keyword id="KW-0408">Iron</keyword>
<keyword id="KW-0411">Iron-sulfur</keyword>
<keyword id="KW-0456">Lyase</keyword>
<keyword id="KW-0479">Metal-binding</keyword>
<keyword id="KW-0949">S-adenosyl-L-methionine</keyword>
<keyword id="KW-0784">Thiamine biosynthesis</keyword>
<keyword id="KW-0862">Zinc</keyword>
<name>THIC_RHILO</name>
<organism>
    <name type="scientific">Mesorhizobium japonicum (strain LMG 29417 / CECT 9101 / MAFF 303099)</name>
    <name type="common">Mesorhizobium loti (strain MAFF 303099)</name>
    <dbReference type="NCBI Taxonomy" id="266835"/>
    <lineage>
        <taxon>Bacteria</taxon>
        <taxon>Pseudomonadati</taxon>
        <taxon>Pseudomonadota</taxon>
        <taxon>Alphaproteobacteria</taxon>
        <taxon>Hyphomicrobiales</taxon>
        <taxon>Phyllobacteriaceae</taxon>
        <taxon>Mesorhizobium</taxon>
    </lineage>
</organism>
<accession>Q98AZ3</accession>
<accession>Q8KJ38</accession>
<dbReference type="EC" id="4.1.99.17" evidence="1"/>
<dbReference type="EMBL" id="BA000012">
    <property type="protein sequence ID" value="BAB52179.1"/>
    <property type="molecule type" value="Genomic_DNA"/>
</dbReference>
<dbReference type="EMBL" id="AL672115">
    <property type="protein sequence ID" value="CAD31245.1"/>
    <property type="molecule type" value="Genomic_DNA"/>
</dbReference>
<dbReference type="SMR" id="Q98AZ3"/>
<dbReference type="KEGG" id="mlo:mll5795"/>
<dbReference type="eggNOG" id="COG0422">
    <property type="taxonomic scope" value="Bacteria"/>
</dbReference>
<dbReference type="HOGENOM" id="CLU_013181_2_1_5"/>
<dbReference type="UniPathway" id="UPA00060"/>
<dbReference type="Proteomes" id="UP000000552">
    <property type="component" value="Chromosome"/>
</dbReference>
<dbReference type="GO" id="GO:0005829">
    <property type="term" value="C:cytosol"/>
    <property type="evidence" value="ECO:0007669"/>
    <property type="project" value="TreeGrafter"/>
</dbReference>
<dbReference type="GO" id="GO:0051539">
    <property type="term" value="F:4 iron, 4 sulfur cluster binding"/>
    <property type="evidence" value="ECO:0007669"/>
    <property type="project" value="UniProtKB-KW"/>
</dbReference>
<dbReference type="GO" id="GO:0016830">
    <property type="term" value="F:carbon-carbon lyase activity"/>
    <property type="evidence" value="ECO:0007669"/>
    <property type="project" value="InterPro"/>
</dbReference>
<dbReference type="GO" id="GO:0008270">
    <property type="term" value="F:zinc ion binding"/>
    <property type="evidence" value="ECO:0007669"/>
    <property type="project" value="UniProtKB-UniRule"/>
</dbReference>
<dbReference type="GO" id="GO:0009228">
    <property type="term" value="P:thiamine biosynthetic process"/>
    <property type="evidence" value="ECO:0007669"/>
    <property type="project" value="UniProtKB-KW"/>
</dbReference>
<dbReference type="GO" id="GO:0009229">
    <property type="term" value="P:thiamine diphosphate biosynthetic process"/>
    <property type="evidence" value="ECO:0007669"/>
    <property type="project" value="UniProtKB-UniRule"/>
</dbReference>
<dbReference type="FunFam" id="3.20.20.540:FF:000001">
    <property type="entry name" value="Phosphomethylpyrimidine synthase"/>
    <property type="match status" value="1"/>
</dbReference>
<dbReference type="Gene3D" id="6.10.250.620">
    <property type="match status" value="1"/>
</dbReference>
<dbReference type="Gene3D" id="3.20.20.540">
    <property type="entry name" value="Radical SAM ThiC family, central domain"/>
    <property type="match status" value="1"/>
</dbReference>
<dbReference type="HAMAP" id="MF_00089">
    <property type="entry name" value="ThiC"/>
    <property type="match status" value="1"/>
</dbReference>
<dbReference type="InterPro" id="IPR037509">
    <property type="entry name" value="ThiC"/>
</dbReference>
<dbReference type="InterPro" id="IPR025747">
    <property type="entry name" value="ThiC-associated_dom"/>
</dbReference>
<dbReference type="InterPro" id="IPR038521">
    <property type="entry name" value="ThiC/Bza_core_dom"/>
</dbReference>
<dbReference type="InterPro" id="IPR002817">
    <property type="entry name" value="ThiC/BzaA/B"/>
</dbReference>
<dbReference type="NCBIfam" id="NF006763">
    <property type="entry name" value="PRK09284.1"/>
    <property type="match status" value="1"/>
</dbReference>
<dbReference type="NCBIfam" id="NF009895">
    <property type="entry name" value="PRK13352.1"/>
    <property type="match status" value="1"/>
</dbReference>
<dbReference type="NCBIfam" id="TIGR00190">
    <property type="entry name" value="thiC"/>
    <property type="match status" value="1"/>
</dbReference>
<dbReference type="PANTHER" id="PTHR30557:SF1">
    <property type="entry name" value="PHOSPHOMETHYLPYRIMIDINE SYNTHASE, CHLOROPLASTIC"/>
    <property type="match status" value="1"/>
</dbReference>
<dbReference type="PANTHER" id="PTHR30557">
    <property type="entry name" value="THIAMINE BIOSYNTHESIS PROTEIN THIC"/>
    <property type="match status" value="1"/>
</dbReference>
<dbReference type="Pfam" id="PF13667">
    <property type="entry name" value="ThiC-associated"/>
    <property type="match status" value="1"/>
</dbReference>
<dbReference type="Pfam" id="PF01964">
    <property type="entry name" value="ThiC_Rad_SAM"/>
    <property type="match status" value="1"/>
</dbReference>
<dbReference type="SFLD" id="SFLDF00407">
    <property type="entry name" value="phosphomethylpyrimidine_syntha"/>
    <property type="match status" value="1"/>
</dbReference>
<dbReference type="SFLD" id="SFLDG01114">
    <property type="entry name" value="phosphomethylpyrimidine_syntha"/>
    <property type="match status" value="1"/>
</dbReference>
<dbReference type="SFLD" id="SFLDS00113">
    <property type="entry name" value="Radical_SAM_Phosphomethylpyrim"/>
    <property type="match status" value="1"/>
</dbReference>
<proteinExistence type="inferred from homology"/>
<reference key="1">
    <citation type="journal article" date="2000" name="DNA Res.">
        <title>Complete genome structure of the nitrogen-fixing symbiotic bacterium Mesorhizobium loti.</title>
        <authorList>
            <person name="Kaneko T."/>
            <person name="Nakamura Y."/>
            <person name="Sato S."/>
            <person name="Asamizu E."/>
            <person name="Kato T."/>
            <person name="Sasamoto S."/>
            <person name="Watanabe A."/>
            <person name="Idesawa K."/>
            <person name="Ishikawa A."/>
            <person name="Kawashima K."/>
            <person name="Kimura T."/>
            <person name="Kishida Y."/>
            <person name="Kiyokawa C."/>
            <person name="Kohara M."/>
            <person name="Matsumoto M."/>
            <person name="Matsuno A."/>
            <person name="Mochizuki Y."/>
            <person name="Nakayama S."/>
            <person name="Nakazaki N."/>
            <person name="Shimpo S."/>
            <person name="Sugimoto M."/>
            <person name="Takeuchi C."/>
            <person name="Yamada M."/>
            <person name="Tabata S."/>
        </authorList>
    </citation>
    <scope>NUCLEOTIDE SEQUENCE [LARGE SCALE GENOMIC DNA]</scope>
    <source>
        <strain>LMG 29417 / CECT 9101 / MAFF 303099</strain>
    </source>
</reference>
<reference key="2">
    <citation type="journal article" date="2002" name="J. Bacteriol.">
        <title>Comparative sequence analysis of the symbiosis island of Mesorhizobium loti strain R7A.</title>
        <authorList>
            <person name="Sullivan J.T."/>
            <person name="Trzebiatowski J.R."/>
            <person name="Cruickshank R.W."/>
            <person name="Gouzy J."/>
            <person name="Brown S.D."/>
            <person name="Elliot R.M."/>
            <person name="Fleetwood D.J."/>
            <person name="McCallum N.G."/>
            <person name="Rossbach U."/>
            <person name="Stuart G.S."/>
            <person name="Weaver J.E."/>
            <person name="Webby R.J."/>
            <person name="de Bruijn F.J."/>
            <person name="Ronson C.W."/>
        </authorList>
    </citation>
    <scope>NUCLEOTIDE SEQUENCE [GENOMIC DNA]</scope>
    <source>
        <strain>R7A</strain>
    </source>
</reference>
<gene>
    <name evidence="1" type="primary">thiC</name>
    <name type="ordered locus">mll5795</name>
</gene>
<evidence type="ECO:0000255" key="1">
    <source>
        <dbReference type="HAMAP-Rule" id="MF_00089"/>
    </source>
</evidence>
<evidence type="ECO:0000256" key="2">
    <source>
        <dbReference type="SAM" id="MobiDB-lite"/>
    </source>
</evidence>
<evidence type="ECO:0000305" key="3"/>
<sequence length="619" mass="68301">MHEQRSLTMNALTPAVSTGPLPASRKIHKSGVLHPQIRVPMREISVHPTAGEPPVIVYDPSGPYTDPTVETSIEKGLARLRHEWITARGDVEAYDGRHVRPEDNGFAVGERLTPEFPVRNRPLRARSGKAVTQLAYARAGIITPEMEFVAIRENLGREMLRGTLQRDGEAFGASIPDLVTPEFVRDEVAHGRAIIPANINHPESEPMIIGRNFLVKINANIGNSAVTSSMAEEVEKMVWAIRWGADTVMDLSTGRNIHNIRDWIVRNAPVPIGTVPLYQALEKVGGIAEDLTWEVYRDTLIEQAEQGVDYFTIHAGVRLHYIPLTVDRVTGIVSRGGSIMAKWCLHHHRESFLYEHFAEVCDICRAYDVSFSLGDGLRPGSIADANDAAQFAELETLGELTKIAWAKDCQVMIEGPGHVPMHKIKANMDKQLAVCGEAPFYTLGPLTTDIAPGYDHITSGIGAAMIGWFGTAMLCYVTPKEHLGLPDRNDVKIGVITYKIAAHAADLAKGHPAAKVRDDALSRARFEFRWEDQFNLSLDPETARSFHDQTLPKEAHKLAHFCSMCGPKFCSMRISHDIRAEAQKEGMAAMAAKYREGGDLYVPAEESGAPLMPEAHELS</sequence>
<protein>
    <recommendedName>
        <fullName evidence="1">Phosphomethylpyrimidine synthase</fullName>
        <ecNumber evidence="1">4.1.99.17</ecNumber>
    </recommendedName>
    <alternativeName>
        <fullName evidence="1">Hydroxymethylpyrimidine phosphate synthase</fullName>
        <shortName evidence="1">HMP-P synthase</shortName>
        <shortName evidence="1">HMP-phosphate synthase</shortName>
        <shortName evidence="1">HMPP synthase</shortName>
    </alternativeName>
    <alternativeName>
        <fullName evidence="1">Thiamine biosynthesis protein ThiC</fullName>
    </alternativeName>
</protein>
<feature type="chain" id="PRO_0000152830" description="Phosphomethylpyrimidine synthase">
    <location>
        <begin position="1"/>
        <end position="619"/>
    </location>
</feature>
<feature type="region of interest" description="Disordered" evidence="2">
    <location>
        <begin position="1"/>
        <end position="25"/>
    </location>
</feature>
<feature type="compositionally biased region" description="Polar residues" evidence="2">
    <location>
        <begin position="1"/>
        <end position="11"/>
    </location>
</feature>
<feature type="binding site" evidence="1">
    <location>
        <position position="220"/>
    </location>
    <ligand>
        <name>substrate</name>
    </ligand>
</feature>
<feature type="binding site" evidence="1">
    <location>
        <position position="249"/>
    </location>
    <ligand>
        <name>substrate</name>
    </ligand>
</feature>
<feature type="binding site" evidence="1">
    <location>
        <position position="278"/>
    </location>
    <ligand>
        <name>substrate</name>
    </ligand>
</feature>
<feature type="binding site" evidence="1">
    <location>
        <position position="314"/>
    </location>
    <ligand>
        <name>substrate</name>
    </ligand>
</feature>
<feature type="binding site" evidence="1">
    <location>
        <begin position="334"/>
        <end position="336"/>
    </location>
    <ligand>
        <name>substrate</name>
    </ligand>
</feature>
<feature type="binding site" evidence="1">
    <location>
        <begin position="375"/>
        <end position="378"/>
    </location>
    <ligand>
        <name>substrate</name>
    </ligand>
</feature>
<feature type="binding site" evidence="1">
    <location>
        <position position="414"/>
    </location>
    <ligand>
        <name>substrate</name>
    </ligand>
</feature>
<feature type="binding site" evidence="1">
    <location>
        <position position="418"/>
    </location>
    <ligand>
        <name>Zn(2+)</name>
        <dbReference type="ChEBI" id="CHEBI:29105"/>
    </ligand>
</feature>
<feature type="binding site" evidence="1">
    <location>
        <position position="441"/>
    </location>
    <ligand>
        <name>substrate</name>
    </ligand>
</feature>
<feature type="binding site" evidence="1">
    <location>
        <position position="482"/>
    </location>
    <ligand>
        <name>Zn(2+)</name>
        <dbReference type="ChEBI" id="CHEBI:29105"/>
    </ligand>
</feature>
<feature type="binding site" evidence="1">
    <location>
        <position position="562"/>
    </location>
    <ligand>
        <name>[4Fe-4S] cluster</name>
        <dbReference type="ChEBI" id="CHEBI:49883"/>
        <note>4Fe-4S-S-AdoMet</note>
    </ligand>
</feature>
<feature type="binding site" evidence="1">
    <location>
        <position position="565"/>
    </location>
    <ligand>
        <name>[4Fe-4S] cluster</name>
        <dbReference type="ChEBI" id="CHEBI:49883"/>
        <note>4Fe-4S-S-AdoMet</note>
    </ligand>
</feature>
<feature type="binding site" evidence="1">
    <location>
        <position position="570"/>
    </location>
    <ligand>
        <name>[4Fe-4S] cluster</name>
        <dbReference type="ChEBI" id="CHEBI:49883"/>
        <note>4Fe-4S-S-AdoMet</note>
    </ligand>
</feature>
<feature type="sequence conflict" description="In Ref. 2; CAD31245." evidence="3" ref="2">
    <original>T</original>
    <variation>K</variation>
    <location>
        <position position="8"/>
    </location>
</feature>
<feature type="sequence conflict" description="In Ref. 2; CAD31245." evidence="3" ref="2">
    <original>QIR</original>
    <variation>HIK</variation>
    <location>
        <begin position="36"/>
        <end position="38"/>
    </location>
</feature>
<feature type="sequence conflict" description="In Ref. 2; CAD31245." evidence="3" ref="2">
    <original>T</original>
    <variation>I</variation>
    <location>
        <position position="68"/>
    </location>
</feature>
<feature type="sequence conflict" description="In Ref. 2; CAD31245." evidence="3" ref="2">
    <original>K</original>
    <variation>N</variation>
    <location>
        <position position="75"/>
    </location>
</feature>
<feature type="sequence conflict" description="In Ref. 2; CAD31245." evidence="3" ref="2">
    <original>H</original>
    <variation>N</variation>
    <location>
        <position position="82"/>
    </location>
</feature>
<feature type="sequence conflict" description="In Ref. 2; CAD31245." evidence="3" ref="2">
    <original>V</original>
    <variation>T</variation>
    <location>
        <position position="108"/>
    </location>
</feature>
<feature type="sequence conflict" description="In Ref. 2; CAD31245." evidence="3" ref="2">
    <original>PV</original>
    <variation>LT</variation>
    <location>
        <begin position="117"/>
        <end position="118"/>
    </location>
</feature>
<feature type="sequence conflict" description="In Ref. 2; CAD31245." evidence="3" ref="2">
    <original>RS</original>
    <variation>KQ</variation>
    <location>
        <begin position="126"/>
        <end position="127"/>
    </location>
</feature>
<feature type="sequence conflict" description="In Ref. 2; CAD31245." evidence="3" ref="2">
    <original>TLQ</original>
    <variation>KLE</variation>
    <location>
        <begin position="163"/>
        <end position="165"/>
    </location>
</feature>
<feature type="sequence conflict" description="In Ref. 2; CAD31245." evidence="3" ref="2">
    <original>S</original>
    <variation>A</variation>
    <location>
        <position position="174"/>
    </location>
</feature>
<feature type="sequence conflict" description="In Ref. 2; CAD31245." evidence="3" ref="2">
    <original>L</original>
    <variation>F</variation>
    <location>
        <position position="178"/>
    </location>
</feature>
<feature type="sequence conflict" description="In Ref. 2; CAD31245." evidence="3" ref="2">
    <original>H</original>
    <variation>R</variation>
    <location>
        <position position="190"/>
    </location>
</feature>
<feature type="sequence conflict" description="In Ref. 2; CAD31245." evidence="3" ref="2">
    <original>D</original>
    <variation>E</variation>
    <location>
        <position position="262"/>
    </location>
</feature>
<feature type="sequence conflict" description="In Ref. 2; CAD31245." evidence="3" ref="2">
    <original>G</original>
    <variation>N</variation>
    <location>
        <position position="285"/>
    </location>
</feature>
<feature type="sequence conflict" description="In Ref. 2; CAD31245." evidence="3" ref="2">
    <original>V</original>
    <variation>M</variation>
    <location>
        <position position="317"/>
    </location>
</feature>
<feature type="sequence conflict" description="In Ref. 2; CAD31245." evidence="3" ref="2">
    <original>H</original>
    <variation>Q</variation>
    <location>
        <position position="346"/>
    </location>
</feature>
<feature type="sequence conflict" description="In Ref. 2; CAD31245." evidence="3" ref="2">
    <original>V</original>
    <variation>I</variation>
    <location>
        <position position="360"/>
    </location>
</feature>
<feature type="sequence conflict" description="In Ref. 2; CAD31245." evidence="3" ref="2">
    <original>K</original>
    <variation>Q</variation>
    <location>
        <position position="402"/>
    </location>
</feature>
<feature type="sequence conflict" description="In Ref. 2; CAD31245." evidence="3" ref="2">
    <original>A</original>
    <variation>E</variation>
    <location>
        <position position="426"/>
    </location>
</feature>
<feature type="sequence conflict" description="In Ref. 2; CAD31245." evidence="3" ref="2">
    <original>L</original>
    <variation>V</variation>
    <location>
        <position position="558"/>
    </location>
</feature>
<feature type="sequence conflict" description="In Ref. 2; CAD31245." evidence="3" ref="2">
    <original>E</original>
    <variation>A</variation>
    <location>
        <position position="596"/>
    </location>
</feature>
<feature type="sequence conflict" description="In Ref. 2." evidence="3" ref="2">
    <original>EESGAPLMPEAHEL</original>
    <variation>DKTGVALMTGAPEP</variation>
    <location>
        <begin position="605"/>
        <end position="618"/>
    </location>
</feature>